<gene>
    <name type="primary">MYSM1</name>
    <name type="ORF">BRAFLDRAFT_86936</name>
</gene>
<keyword id="KW-0010">Activator</keyword>
<keyword id="KW-0156">Chromatin regulator</keyword>
<keyword id="KW-0238">DNA-binding</keyword>
<keyword id="KW-0378">Hydrolase</keyword>
<keyword id="KW-0479">Metal-binding</keyword>
<keyword id="KW-0482">Metalloprotease</keyword>
<keyword id="KW-0539">Nucleus</keyword>
<keyword id="KW-0645">Protease</keyword>
<keyword id="KW-1185">Reference proteome</keyword>
<keyword id="KW-0804">Transcription</keyword>
<keyword id="KW-0805">Transcription regulation</keyword>
<keyword id="KW-0833">Ubl conjugation pathway</keyword>
<keyword id="KW-0862">Zinc</keyword>
<accession>B6MUN4</accession>
<protein>
    <recommendedName>
        <fullName>Histone H2A deubiquitinase MYSM1</fullName>
        <shortName>2A-DUB</shortName>
        <ecNumber>3.4.19.-</ecNumber>
    </recommendedName>
    <alternativeName>
        <fullName>Myb-like, SWIRM and MPN domain-containing protein 1</fullName>
    </alternativeName>
</protein>
<name>MYSM1_BRAFL</name>
<organism>
    <name type="scientific">Branchiostoma floridae</name>
    <name type="common">Florida lancelet</name>
    <name type="synonym">Amphioxus</name>
    <dbReference type="NCBI Taxonomy" id="7739"/>
    <lineage>
        <taxon>Eukaryota</taxon>
        <taxon>Metazoa</taxon>
        <taxon>Chordata</taxon>
        <taxon>Cephalochordata</taxon>
        <taxon>Leptocardii</taxon>
        <taxon>Amphioxiformes</taxon>
        <taxon>Branchiostomatidae</taxon>
        <taxon>Branchiostoma</taxon>
    </lineage>
</organism>
<proteinExistence type="inferred from homology"/>
<dbReference type="EC" id="3.4.19.-"/>
<dbReference type="EMBL" id="ABEP02030881">
    <property type="status" value="NOT_ANNOTATED_CDS"/>
    <property type="molecule type" value="Genomic_DNA"/>
</dbReference>
<dbReference type="EMBL" id="ABEP02030882">
    <property type="status" value="NOT_ANNOTATED_CDS"/>
    <property type="molecule type" value="Genomic_DNA"/>
</dbReference>
<dbReference type="EMBL" id="ABEP02030884">
    <property type="status" value="NOT_ANNOTATED_CDS"/>
    <property type="molecule type" value="Genomic_DNA"/>
</dbReference>
<dbReference type="FunCoup" id="B6MUN4">
    <property type="interactions" value="350"/>
</dbReference>
<dbReference type="STRING" id="7739.B6MUN4"/>
<dbReference type="eggNOG" id="KOG1279">
    <property type="taxonomic scope" value="Eukaryota"/>
</dbReference>
<dbReference type="InParanoid" id="B6MUN4"/>
<dbReference type="Proteomes" id="UP000001554">
    <property type="component" value="Unplaced"/>
</dbReference>
<dbReference type="GO" id="GO:0005634">
    <property type="term" value="C:nucleus"/>
    <property type="evidence" value="ECO:0000250"/>
    <property type="project" value="UniProtKB"/>
</dbReference>
<dbReference type="GO" id="GO:0003677">
    <property type="term" value="F:DNA binding"/>
    <property type="evidence" value="ECO:0007669"/>
    <property type="project" value="UniProtKB-KW"/>
</dbReference>
<dbReference type="GO" id="GO:0042393">
    <property type="term" value="F:histone binding"/>
    <property type="evidence" value="ECO:0000250"/>
    <property type="project" value="UniProtKB"/>
</dbReference>
<dbReference type="GO" id="GO:0140950">
    <property type="term" value="F:histone H2A deubiquitinase activity"/>
    <property type="evidence" value="ECO:0000250"/>
    <property type="project" value="UniProtKB"/>
</dbReference>
<dbReference type="GO" id="GO:0046872">
    <property type="term" value="F:metal ion binding"/>
    <property type="evidence" value="ECO:0007669"/>
    <property type="project" value="UniProtKB-KW"/>
</dbReference>
<dbReference type="GO" id="GO:0140492">
    <property type="term" value="F:metal-dependent deubiquitinase activity"/>
    <property type="evidence" value="ECO:0000250"/>
    <property type="project" value="UniProtKB"/>
</dbReference>
<dbReference type="GO" id="GO:0003713">
    <property type="term" value="F:transcription coactivator activity"/>
    <property type="evidence" value="ECO:0000250"/>
    <property type="project" value="UniProtKB"/>
</dbReference>
<dbReference type="GO" id="GO:0006338">
    <property type="term" value="P:chromatin remodeling"/>
    <property type="evidence" value="ECO:0000250"/>
    <property type="project" value="UniProtKB"/>
</dbReference>
<dbReference type="GO" id="GO:0045944">
    <property type="term" value="P:positive regulation of transcription by RNA polymerase II"/>
    <property type="evidence" value="ECO:0000250"/>
    <property type="project" value="UniProtKB"/>
</dbReference>
<dbReference type="GO" id="GO:0006508">
    <property type="term" value="P:proteolysis"/>
    <property type="evidence" value="ECO:0007669"/>
    <property type="project" value="UniProtKB-KW"/>
</dbReference>
<dbReference type="CDD" id="cd08067">
    <property type="entry name" value="MPN_2A_DUB"/>
    <property type="match status" value="1"/>
</dbReference>
<dbReference type="CDD" id="cd00167">
    <property type="entry name" value="SANT"/>
    <property type="match status" value="1"/>
</dbReference>
<dbReference type="FunFam" id="3.40.140.10:FF:000159">
    <property type="entry name" value="Histone H2A deubiquitinase MYSM1"/>
    <property type="match status" value="1"/>
</dbReference>
<dbReference type="FunFam" id="1.10.10.10:FF:000193">
    <property type="entry name" value="histone H2A deubiquitinase MYSM1 isoform X1"/>
    <property type="match status" value="1"/>
</dbReference>
<dbReference type="Gene3D" id="3.40.140.10">
    <property type="entry name" value="Cytidine Deaminase, domain 2"/>
    <property type="match status" value="1"/>
</dbReference>
<dbReference type="Gene3D" id="1.10.10.60">
    <property type="entry name" value="Homeodomain-like"/>
    <property type="match status" value="1"/>
</dbReference>
<dbReference type="Gene3D" id="1.10.10.10">
    <property type="entry name" value="Winged helix-like DNA-binding domain superfamily/Winged helix DNA-binding domain"/>
    <property type="match status" value="1"/>
</dbReference>
<dbReference type="InterPro" id="IPR009057">
    <property type="entry name" value="Homeodomain-like_sf"/>
</dbReference>
<dbReference type="InterPro" id="IPR000555">
    <property type="entry name" value="JAMM/MPN+_dom"/>
</dbReference>
<dbReference type="InterPro" id="IPR050242">
    <property type="entry name" value="JAMM_MPN+_peptidase_M67A"/>
</dbReference>
<dbReference type="InterPro" id="IPR037518">
    <property type="entry name" value="MPN"/>
</dbReference>
<dbReference type="InterPro" id="IPR017930">
    <property type="entry name" value="Myb_dom"/>
</dbReference>
<dbReference type="InterPro" id="IPR001005">
    <property type="entry name" value="SANT/Myb"/>
</dbReference>
<dbReference type="InterPro" id="IPR017884">
    <property type="entry name" value="SANT_dom"/>
</dbReference>
<dbReference type="InterPro" id="IPR007526">
    <property type="entry name" value="SWIRM"/>
</dbReference>
<dbReference type="InterPro" id="IPR036388">
    <property type="entry name" value="WH-like_DNA-bd_sf"/>
</dbReference>
<dbReference type="PANTHER" id="PTHR10410">
    <property type="entry name" value="EUKARYOTIC TRANSLATION INITIATION FACTOR 3 -RELATED"/>
    <property type="match status" value="1"/>
</dbReference>
<dbReference type="Pfam" id="PF01398">
    <property type="entry name" value="JAB"/>
    <property type="match status" value="1"/>
</dbReference>
<dbReference type="Pfam" id="PF04433">
    <property type="entry name" value="SWIRM"/>
    <property type="match status" value="1"/>
</dbReference>
<dbReference type="SMART" id="SM00232">
    <property type="entry name" value="JAB_MPN"/>
    <property type="match status" value="1"/>
</dbReference>
<dbReference type="SUPFAM" id="SSF46689">
    <property type="entry name" value="Homeodomain-like"/>
    <property type="match status" value="2"/>
</dbReference>
<dbReference type="SUPFAM" id="SSF102712">
    <property type="entry name" value="JAB1/MPN domain"/>
    <property type="match status" value="1"/>
</dbReference>
<dbReference type="PROSITE" id="PS50249">
    <property type="entry name" value="MPN"/>
    <property type="match status" value="1"/>
</dbReference>
<dbReference type="PROSITE" id="PS50934">
    <property type="entry name" value="SWIRM"/>
    <property type="match status" value="1"/>
</dbReference>
<feature type="chain" id="PRO_0000373927" description="Histone H2A deubiquitinase MYSM1">
    <location>
        <begin position="1"/>
        <end position="809"/>
    </location>
</feature>
<feature type="domain" description="SANT">
    <location>
        <begin position="33"/>
        <end position="78"/>
    </location>
</feature>
<feature type="domain" description="SWIRM" evidence="2">
    <location>
        <begin position="410"/>
        <end position="508"/>
    </location>
</feature>
<feature type="domain" description="MPN" evidence="3">
    <location>
        <begin position="592"/>
        <end position="719"/>
    </location>
</feature>
<feature type="region of interest" description="Disordered" evidence="4">
    <location>
        <begin position="113"/>
        <end position="140"/>
    </location>
</feature>
<feature type="region of interest" description="Disordered" evidence="4">
    <location>
        <begin position="320"/>
        <end position="378"/>
    </location>
</feature>
<feature type="short sequence motif" description="JAMM motif" evidence="3">
    <location>
        <begin position="671"/>
        <end position="684"/>
    </location>
</feature>
<feature type="compositionally biased region" description="Basic and acidic residues" evidence="4">
    <location>
        <begin position="335"/>
        <end position="345"/>
    </location>
</feature>
<feature type="compositionally biased region" description="Basic and acidic residues" evidence="4">
    <location>
        <begin position="363"/>
        <end position="378"/>
    </location>
</feature>
<feature type="binding site" evidence="3">
    <location>
        <position position="671"/>
    </location>
    <ligand>
        <name>Zn(2+)</name>
        <dbReference type="ChEBI" id="CHEBI:29105"/>
        <note>catalytic</note>
    </ligand>
</feature>
<feature type="binding site" evidence="3">
    <location>
        <position position="673"/>
    </location>
    <ligand>
        <name>Zn(2+)</name>
        <dbReference type="ChEBI" id="CHEBI:29105"/>
        <note>catalytic</note>
    </ligand>
</feature>
<feature type="binding site" evidence="3">
    <location>
        <position position="684"/>
    </location>
    <ligand>
        <name>Zn(2+)</name>
        <dbReference type="ChEBI" id="CHEBI:29105"/>
        <note>catalytic</note>
    </ligand>
</feature>
<comment type="function">
    <text evidence="1">Metalloprotease that specifically deubiquitinates monoubiquitinated histone H2A, a specific tag for epigenetic transcriptional repression, thereby acting as a coactivator. Preferentially deubiquitinates monoubiquitinated H2A in hyperacetylated nucleosomes. Deubiquitination of histone H2A leads to facilitate the phosphorylation and dissociation of histone H1 from the nucleosome. Acts as a coactivator by participating in the initiation and elongation steps of androgen receptor (AR)-induced gene activation (By similarity).</text>
</comment>
<comment type="subcellular location">
    <subcellularLocation>
        <location evidence="1">Nucleus</location>
    </subcellularLocation>
</comment>
<comment type="domain">
    <text evidence="1">Binds double-stranded DNA via the SANT domain. The SWIRM domain does not bind double-stranded DNA (By similarity).</text>
</comment>
<comment type="similarity">
    <text evidence="5">Belongs to the peptidase M67A family. MYSM1 subfamily.</text>
</comment>
<evidence type="ECO:0000250" key="1"/>
<evidence type="ECO:0000255" key="2">
    <source>
        <dbReference type="PROSITE-ProRule" id="PRU00247"/>
    </source>
</evidence>
<evidence type="ECO:0000255" key="3">
    <source>
        <dbReference type="PROSITE-ProRule" id="PRU01182"/>
    </source>
</evidence>
<evidence type="ECO:0000256" key="4">
    <source>
        <dbReference type="SAM" id="MobiDB-lite"/>
    </source>
</evidence>
<evidence type="ECO:0000305" key="5"/>
<sequence>MADDEEIDIEGDDDAPLLFDHKDDALALPDLPGYEPNWMFDHGQEIYGRSWTSISQFVQTRTPLQVKNYARHFFKTKVVQKVEEGEDEDVDIEGEESGEEAVMELRSTCGLNPAQPAVVTSDDTSTGENVMEETEAVTEDHPSLDNLVQDDREMPQQETTGDGEQYPMDEHFLPVFPWQPDDTQNRVIVERIEGSVGLGSVRGDKDVRPVPGVEQNTYGPHTDMFQVQNTLLAFEKQVGADRIFEGPSXSKNEATDTQTEVSETKTEVIERQTESQVDATHMHTYGDGLMGSIERLTESVSSSELKEDLKTGIEYVEKDDATDSSSTAKGYDNYTLDHPEDRSKPDSVVSEKWSCEEAMSSHTDGRTFSDSDSGKETYDLPRYNTTIFQGHSEDETSDAGQAEEETFFTFKKPTEEVVLDRSVITEEEKEVHKEFFDGRQTKTPERYLKIRNHLLDCWERTKPEYLRKTVARAGLRNCGDVNCIGRIHGYLERIGAINFGCEEANRGEFPVAKVGVKRNPQGHGEQLALQAARLESMHVTSDELEKQDGGVSQIRPNRSRAARTNLNSFSYDPFKLVPCKRFSEESPAPFSVKIHATALVTIDMHAHISTAEVIGLLGGVFHRDPGALEVASAEPCNSLSTGMQCEMDPVSQTQASEALSQAGYSVVGWYHSHPTFAPNPSVRDIETQTKFQEWFAQGGSPFIGIIVNPYSSTRISPLSRVTCLTISSEWNPPAIQRVKLLSRYAGHTDTTYMDKMLYSLSGHLCRGNADSDEDGNSESLTLLTDIRDIFANSWTSSLGTTPRSSIASL</sequence>
<reference key="1">
    <citation type="journal article" date="2008" name="Nature">
        <title>The amphioxus genome and the evolution of the chordate karyotype.</title>
        <authorList>
            <person name="Putnam N.H."/>
            <person name="Butts T."/>
            <person name="Ferrier D.E.K."/>
            <person name="Furlong R.F."/>
            <person name="Hellsten U."/>
            <person name="Kawashima T."/>
            <person name="Robinson-Rechavi M."/>
            <person name="Shoguchi E."/>
            <person name="Terry A."/>
            <person name="Yu J.-K."/>
            <person name="Benito-Gutierrez E.L."/>
            <person name="Dubchak I."/>
            <person name="Garcia-Fernandez J."/>
            <person name="Gibson-Brown J.J."/>
            <person name="Grigoriev I.V."/>
            <person name="Horton A.C."/>
            <person name="de Jong P.J."/>
            <person name="Jurka J."/>
            <person name="Kapitonov V.V."/>
            <person name="Kohara Y."/>
            <person name="Kuroki Y."/>
            <person name="Lindquist E."/>
            <person name="Lucas S."/>
            <person name="Osoegawa K."/>
            <person name="Pennacchio L.A."/>
            <person name="Salamov A.A."/>
            <person name="Satou Y."/>
            <person name="Sauka-Spengler T."/>
            <person name="Schmutz J."/>
            <person name="Shin-I T."/>
            <person name="Toyoda A."/>
            <person name="Bronner-Fraser M."/>
            <person name="Fujiyama A."/>
            <person name="Holland L.Z."/>
            <person name="Holland P.W.H."/>
            <person name="Satoh N."/>
            <person name="Rokhsar D.S."/>
        </authorList>
    </citation>
    <scope>NUCLEOTIDE SEQUENCE [LARGE SCALE GENOMIC DNA]</scope>
    <source>
        <strain>S238N-H82</strain>
        <tissue>Testis</tissue>
    </source>
</reference>